<gene>
    <name evidence="1" type="primary">rpsE</name>
    <name type="ordered locus">RMA_1023</name>
</gene>
<reference key="1">
    <citation type="journal article" date="2007" name="Genome Res.">
        <title>Lateral gene transfer between obligate intracellular bacteria: evidence from the Rickettsia massiliae genome.</title>
        <authorList>
            <person name="Blanc G."/>
            <person name="Ogata H."/>
            <person name="Robert C."/>
            <person name="Audic S."/>
            <person name="Claverie J.-M."/>
            <person name="Raoult D."/>
        </authorList>
    </citation>
    <scope>NUCLEOTIDE SEQUENCE [LARGE SCALE GENOMIC DNA]</scope>
    <source>
        <strain>Mtu5</strain>
    </source>
</reference>
<sequence>MSKVKKNDETLSEVLVDVNRVTKVVKGGRRFAFSAYVVVGDKAGRVGAGHGKAKEVNEARGKAKQAAKKRMMKVPLYQNRTIHHDVVGKSGAAKVILRRAKAGTGIIAGGSMRAIFDSLGVHDIVAKSIGSTNVYAMISATFDALNKLASPKSIAMRRDKKVNEIFVKSSDIQVNE</sequence>
<dbReference type="EMBL" id="CP000683">
    <property type="protein sequence ID" value="ABV85066.1"/>
    <property type="status" value="ALT_INIT"/>
    <property type="molecule type" value="Genomic_DNA"/>
</dbReference>
<dbReference type="RefSeq" id="WP_014365550.1">
    <property type="nucleotide sequence ID" value="NC_009900.1"/>
</dbReference>
<dbReference type="SMR" id="A8F2D0"/>
<dbReference type="KEGG" id="rms:RMA_1023"/>
<dbReference type="HOGENOM" id="CLU_065898_2_2_5"/>
<dbReference type="Proteomes" id="UP000001311">
    <property type="component" value="Chromosome"/>
</dbReference>
<dbReference type="GO" id="GO:0015935">
    <property type="term" value="C:small ribosomal subunit"/>
    <property type="evidence" value="ECO:0007669"/>
    <property type="project" value="InterPro"/>
</dbReference>
<dbReference type="GO" id="GO:0019843">
    <property type="term" value="F:rRNA binding"/>
    <property type="evidence" value="ECO:0007669"/>
    <property type="project" value="UniProtKB-UniRule"/>
</dbReference>
<dbReference type="GO" id="GO:0003735">
    <property type="term" value="F:structural constituent of ribosome"/>
    <property type="evidence" value="ECO:0007669"/>
    <property type="project" value="InterPro"/>
</dbReference>
<dbReference type="GO" id="GO:0006412">
    <property type="term" value="P:translation"/>
    <property type="evidence" value="ECO:0007669"/>
    <property type="project" value="UniProtKB-UniRule"/>
</dbReference>
<dbReference type="FunFam" id="3.30.230.10:FF:000002">
    <property type="entry name" value="30S ribosomal protein S5"/>
    <property type="match status" value="1"/>
</dbReference>
<dbReference type="Gene3D" id="3.30.160.20">
    <property type="match status" value="1"/>
</dbReference>
<dbReference type="Gene3D" id="3.30.230.10">
    <property type="match status" value="1"/>
</dbReference>
<dbReference type="HAMAP" id="MF_01307_B">
    <property type="entry name" value="Ribosomal_uS5_B"/>
    <property type="match status" value="1"/>
</dbReference>
<dbReference type="InterPro" id="IPR020568">
    <property type="entry name" value="Ribosomal_Su5_D2-typ_SF"/>
</dbReference>
<dbReference type="InterPro" id="IPR000851">
    <property type="entry name" value="Ribosomal_uS5"/>
</dbReference>
<dbReference type="InterPro" id="IPR005712">
    <property type="entry name" value="Ribosomal_uS5_bac-type"/>
</dbReference>
<dbReference type="InterPro" id="IPR005324">
    <property type="entry name" value="Ribosomal_uS5_C"/>
</dbReference>
<dbReference type="InterPro" id="IPR013810">
    <property type="entry name" value="Ribosomal_uS5_N"/>
</dbReference>
<dbReference type="InterPro" id="IPR018192">
    <property type="entry name" value="Ribosomal_uS5_N_CS"/>
</dbReference>
<dbReference type="InterPro" id="IPR014721">
    <property type="entry name" value="Ribsml_uS5_D2-typ_fold_subgr"/>
</dbReference>
<dbReference type="NCBIfam" id="TIGR01021">
    <property type="entry name" value="rpsE_bact"/>
    <property type="match status" value="1"/>
</dbReference>
<dbReference type="PANTHER" id="PTHR48277">
    <property type="entry name" value="MITOCHONDRIAL RIBOSOMAL PROTEIN S5"/>
    <property type="match status" value="1"/>
</dbReference>
<dbReference type="PANTHER" id="PTHR48277:SF1">
    <property type="entry name" value="MITOCHONDRIAL RIBOSOMAL PROTEIN S5"/>
    <property type="match status" value="1"/>
</dbReference>
<dbReference type="Pfam" id="PF00333">
    <property type="entry name" value="Ribosomal_S5"/>
    <property type="match status" value="1"/>
</dbReference>
<dbReference type="Pfam" id="PF03719">
    <property type="entry name" value="Ribosomal_S5_C"/>
    <property type="match status" value="1"/>
</dbReference>
<dbReference type="SUPFAM" id="SSF54768">
    <property type="entry name" value="dsRNA-binding domain-like"/>
    <property type="match status" value="1"/>
</dbReference>
<dbReference type="SUPFAM" id="SSF54211">
    <property type="entry name" value="Ribosomal protein S5 domain 2-like"/>
    <property type="match status" value="1"/>
</dbReference>
<dbReference type="PROSITE" id="PS00585">
    <property type="entry name" value="RIBOSOMAL_S5"/>
    <property type="match status" value="1"/>
</dbReference>
<dbReference type="PROSITE" id="PS50881">
    <property type="entry name" value="S5_DSRBD"/>
    <property type="match status" value="1"/>
</dbReference>
<accession>A8F2D0</accession>
<keyword id="KW-0687">Ribonucleoprotein</keyword>
<keyword id="KW-0689">Ribosomal protein</keyword>
<keyword id="KW-0694">RNA-binding</keyword>
<keyword id="KW-0699">rRNA-binding</keyword>
<proteinExistence type="inferred from homology"/>
<organism>
    <name type="scientific">Rickettsia massiliae (strain Mtu5)</name>
    <dbReference type="NCBI Taxonomy" id="416276"/>
    <lineage>
        <taxon>Bacteria</taxon>
        <taxon>Pseudomonadati</taxon>
        <taxon>Pseudomonadota</taxon>
        <taxon>Alphaproteobacteria</taxon>
        <taxon>Rickettsiales</taxon>
        <taxon>Rickettsiaceae</taxon>
        <taxon>Rickettsieae</taxon>
        <taxon>Rickettsia</taxon>
        <taxon>spotted fever group</taxon>
    </lineage>
</organism>
<evidence type="ECO:0000255" key="1">
    <source>
        <dbReference type="HAMAP-Rule" id="MF_01307"/>
    </source>
</evidence>
<evidence type="ECO:0000305" key="2"/>
<feature type="chain" id="PRO_0000323185" description="Small ribosomal subunit protein uS5">
    <location>
        <begin position="1"/>
        <end position="176"/>
    </location>
</feature>
<feature type="domain" description="S5 DRBM" evidence="1">
    <location>
        <begin position="11"/>
        <end position="74"/>
    </location>
</feature>
<comment type="function">
    <text evidence="1">With S4 and S12 plays an important role in translational accuracy.</text>
</comment>
<comment type="function">
    <text evidence="1">Located at the back of the 30S subunit body where it stabilizes the conformation of the head with respect to the body.</text>
</comment>
<comment type="subunit">
    <text evidence="1">Part of the 30S ribosomal subunit. Contacts proteins S4 and S8.</text>
</comment>
<comment type="domain">
    <text>The N-terminal domain interacts with the head of the 30S subunit; the C-terminal domain interacts with the body and contacts protein S4. The interaction surface between S4 and S5 is involved in control of translational fidelity.</text>
</comment>
<comment type="similarity">
    <text evidence="1">Belongs to the universal ribosomal protein uS5 family.</text>
</comment>
<comment type="sequence caution" evidence="2">
    <conflict type="erroneous initiation">
        <sequence resource="EMBL-CDS" id="ABV85066"/>
    </conflict>
</comment>
<name>RS5_RICM5</name>
<protein>
    <recommendedName>
        <fullName evidence="1">Small ribosomal subunit protein uS5</fullName>
    </recommendedName>
    <alternativeName>
        <fullName evidence="2">30S ribosomal protein S5</fullName>
    </alternativeName>
</protein>